<keyword id="KW-0963">Cytoplasm</keyword>
<keyword id="KW-0378">Hydrolase</keyword>
<keyword id="KW-0546">Nucleotide metabolism</keyword>
<keyword id="KW-1185">Reference proteome</keyword>
<proteinExistence type="inferred from homology"/>
<accession>Q4FUF9</accession>
<organism>
    <name type="scientific">Psychrobacter arcticus (strain DSM 17307 / VKM B-2377 / 273-4)</name>
    <dbReference type="NCBI Taxonomy" id="259536"/>
    <lineage>
        <taxon>Bacteria</taxon>
        <taxon>Pseudomonadati</taxon>
        <taxon>Pseudomonadota</taxon>
        <taxon>Gammaproteobacteria</taxon>
        <taxon>Moraxellales</taxon>
        <taxon>Moraxellaceae</taxon>
        <taxon>Psychrobacter</taxon>
    </lineage>
</organism>
<protein>
    <recommendedName>
        <fullName evidence="1">dTTP/UTP pyrophosphatase</fullName>
        <shortName evidence="1">dTTPase/UTPase</shortName>
        <ecNumber evidence="1">3.6.1.9</ecNumber>
    </recommendedName>
    <alternativeName>
        <fullName evidence="1">Nucleoside triphosphate pyrophosphatase</fullName>
    </alternativeName>
    <alternativeName>
        <fullName evidence="1">Nucleotide pyrophosphatase</fullName>
        <shortName evidence="1">Nucleotide PPase</shortName>
    </alternativeName>
</protein>
<feature type="chain" id="PRO_0000267385" description="dTTP/UTP pyrophosphatase">
    <location>
        <begin position="1"/>
        <end position="231"/>
    </location>
</feature>
<feature type="active site" description="Proton acceptor" evidence="1">
    <location>
        <position position="85"/>
    </location>
</feature>
<feature type="site" description="Important for substrate specificity" evidence="1">
    <location>
        <position position="11"/>
    </location>
</feature>
<feature type="site" description="Important for substrate specificity" evidence="1">
    <location>
        <position position="86"/>
    </location>
</feature>
<feature type="site" description="Important for substrate specificity" evidence="1">
    <location>
        <position position="188"/>
    </location>
</feature>
<gene>
    <name type="ordered locus">Psyc_0486</name>
</gene>
<evidence type="ECO:0000255" key="1">
    <source>
        <dbReference type="HAMAP-Rule" id="MF_00528"/>
    </source>
</evidence>
<comment type="function">
    <text evidence="1">Nucleoside triphosphate pyrophosphatase that hydrolyzes dTTP and UTP. May have a dual role in cell division arrest and in preventing the incorporation of modified nucleotides into cellular nucleic acids.</text>
</comment>
<comment type="catalytic activity">
    <reaction evidence="1">
        <text>dTTP + H2O = dTMP + diphosphate + H(+)</text>
        <dbReference type="Rhea" id="RHEA:28534"/>
        <dbReference type="ChEBI" id="CHEBI:15377"/>
        <dbReference type="ChEBI" id="CHEBI:15378"/>
        <dbReference type="ChEBI" id="CHEBI:33019"/>
        <dbReference type="ChEBI" id="CHEBI:37568"/>
        <dbReference type="ChEBI" id="CHEBI:63528"/>
        <dbReference type="EC" id="3.6.1.9"/>
    </reaction>
</comment>
<comment type="catalytic activity">
    <reaction evidence="1">
        <text>UTP + H2O = UMP + diphosphate + H(+)</text>
        <dbReference type="Rhea" id="RHEA:29395"/>
        <dbReference type="ChEBI" id="CHEBI:15377"/>
        <dbReference type="ChEBI" id="CHEBI:15378"/>
        <dbReference type="ChEBI" id="CHEBI:33019"/>
        <dbReference type="ChEBI" id="CHEBI:46398"/>
        <dbReference type="ChEBI" id="CHEBI:57865"/>
        <dbReference type="EC" id="3.6.1.9"/>
    </reaction>
</comment>
<comment type="cofactor">
    <cofactor evidence="1">
        <name>a divalent metal cation</name>
        <dbReference type="ChEBI" id="CHEBI:60240"/>
    </cofactor>
</comment>
<comment type="subcellular location">
    <subcellularLocation>
        <location evidence="1">Cytoplasm</location>
    </subcellularLocation>
</comment>
<comment type="similarity">
    <text evidence="1">Belongs to the Maf family. YhdE subfamily.</text>
</comment>
<dbReference type="EC" id="3.6.1.9" evidence="1"/>
<dbReference type="EMBL" id="CP000082">
    <property type="protein sequence ID" value="AAZ18349.1"/>
    <property type="molecule type" value="Genomic_DNA"/>
</dbReference>
<dbReference type="RefSeq" id="WP_011279785.1">
    <property type="nucleotide sequence ID" value="NC_007204.1"/>
</dbReference>
<dbReference type="SMR" id="Q4FUF9"/>
<dbReference type="STRING" id="259536.Psyc_0486"/>
<dbReference type="KEGG" id="par:Psyc_0486"/>
<dbReference type="eggNOG" id="COG0424">
    <property type="taxonomic scope" value="Bacteria"/>
</dbReference>
<dbReference type="HOGENOM" id="CLU_040416_2_1_6"/>
<dbReference type="OrthoDB" id="9807767at2"/>
<dbReference type="Proteomes" id="UP000000546">
    <property type="component" value="Chromosome"/>
</dbReference>
<dbReference type="GO" id="GO:0005737">
    <property type="term" value="C:cytoplasm"/>
    <property type="evidence" value="ECO:0007669"/>
    <property type="project" value="UniProtKB-SubCell"/>
</dbReference>
<dbReference type="GO" id="GO:0036218">
    <property type="term" value="F:dTTP diphosphatase activity"/>
    <property type="evidence" value="ECO:0007669"/>
    <property type="project" value="RHEA"/>
</dbReference>
<dbReference type="GO" id="GO:0036221">
    <property type="term" value="F:UTP diphosphatase activity"/>
    <property type="evidence" value="ECO:0007669"/>
    <property type="project" value="RHEA"/>
</dbReference>
<dbReference type="GO" id="GO:0009117">
    <property type="term" value="P:nucleotide metabolic process"/>
    <property type="evidence" value="ECO:0007669"/>
    <property type="project" value="UniProtKB-KW"/>
</dbReference>
<dbReference type="CDD" id="cd00555">
    <property type="entry name" value="Maf"/>
    <property type="match status" value="1"/>
</dbReference>
<dbReference type="Gene3D" id="3.90.950.10">
    <property type="match status" value="1"/>
</dbReference>
<dbReference type="HAMAP" id="MF_00528">
    <property type="entry name" value="Maf"/>
    <property type="match status" value="1"/>
</dbReference>
<dbReference type="InterPro" id="IPR029001">
    <property type="entry name" value="ITPase-like_fam"/>
</dbReference>
<dbReference type="InterPro" id="IPR003697">
    <property type="entry name" value="Maf-like"/>
</dbReference>
<dbReference type="NCBIfam" id="TIGR00172">
    <property type="entry name" value="maf"/>
    <property type="match status" value="1"/>
</dbReference>
<dbReference type="PANTHER" id="PTHR43213">
    <property type="entry name" value="BIFUNCTIONAL DTTP/UTP PYROPHOSPHATASE/METHYLTRANSFERASE PROTEIN-RELATED"/>
    <property type="match status" value="1"/>
</dbReference>
<dbReference type="PANTHER" id="PTHR43213:SF5">
    <property type="entry name" value="BIFUNCTIONAL DTTP_UTP PYROPHOSPHATASE_METHYLTRANSFERASE PROTEIN-RELATED"/>
    <property type="match status" value="1"/>
</dbReference>
<dbReference type="Pfam" id="PF02545">
    <property type="entry name" value="Maf"/>
    <property type="match status" value="1"/>
</dbReference>
<dbReference type="PIRSF" id="PIRSF006305">
    <property type="entry name" value="Maf"/>
    <property type="match status" value="1"/>
</dbReference>
<dbReference type="SUPFAM" id="SSF52972">
    <property type="entry name" value="ITPase-like"/>
    <property type="match status" value="1"/>
</dbReference>
<sequence>MDIILASGSPRRRELLSRAQLEFTIISVDIDETPYQDELPKDYIVRMVAAKAEAAATQLNIQLKNNEAHSSKSLLSQPIILLTSDTIGVLPDGKTVLIKPSNREDAYHMWQQMSDSTHEVWTAVQATQLSLHSKHTDEFDTEPVWQIINQKQIIERTEVTFIALTPEMMSDYWDGGEPADKAGGYGIQGLGAAWVSRINGSYTNVVGLPLAQTLALIKEMTNTAMLENFDA</sequence>
<reference key="1">
    <citation type="journal article" date="2010" name="Appl. Environ. Microbiol.">
        <title>The genome sequence of Psychrobacter arcticus 273-4, a psychroactive Siberian permafrost bacterium, reveals mechanisms for adaptation to low-temperature growth.</title>
        <authorList>
            <person name="Ayala-del-Rio H.L."/>
            <person name="Chain P.S."/>
            <person name="Grzymski J.J."/>
            <person name="Ponder M.A."/>
            <person name="Ivanova N."/>
            <person name="Bergholz P.W."/>
            <person name="Di Bartolo G."/>
            <person name="Hauser L."/>
            <person name="Land M."/>
            <person name="Bakermans C."/>
            <person name="Rodrigues D."/>
            <person name="Klappenbach J."/>
            <person name="Zarka D."/>
            <person name="Larimer F."/>
            <person name="Richardson P."/>
            <person name="Murray A."/>
            <person name="Thomashow M."/>
            <person name="Tiedje J.M."/>
        </authorList>
    </citation>
    <scope>NUCLEOTIDE SEQUENCE [LARGE SCALE GENOMIC DNA]</scope>
    <source>
        <strain>DSM 17307 / VKM B-2377 / 273-4</strain>
    </source>
</reference>
<name>NTPPA_PSYA2</name>